<evidence type="ECO:0000255" key="1">
    <source>
        <dbReference type="HAMAP-Rule" id="MF_01702"/>
    </source>
</evidence>
<dbReference type="EC" id="7.3.2.1" evidence="1"/>
<dbReference type="EMBL" id="CP000103">
    <property type="protein sequence ID" value="ABB74391.1"/>
    <property type="molecule type" value="Genomic_DNA"/>
</dbReference>
<dbReference type="RefSeq" id="WP_011380432.1">
    <property type="nucleotide sequence ID" value="NC_007614.1"/>
</dbReference>
<dbReference type="SMR" id="Q2YA30"/>
<dbReference type="STRING" id="323848.Nmul_A1088"/>
<dbReference type="KEGG" id="nmu:Nmul_A1088"/>
<dbReference type="eggNOG" id="COG1117">
    <property type="taxonomic scope" value="Bacteria"/>
</dbReference>
<dbReference type="HOGENOM" id="CLU_000604_1_22_4"/>
<dbReference type="OrthoDB" id="9802264at2"/>
<dbReference type="Proteomes" id="UP000002718">
    <property type="component" value="Chromosome"/>
</dbReference>
<dbReference type="GO" id="GO:0005886">
    <property type="term" value="C:plasma membrane"/>
    <property type="evidence" value="ECO:0007669"/>
    <property type="project" value="UniProtKB-SubCell"/>
</dbReference>
<dbReference type="GO" id="GO:0005524">
    <property type="term" value="F:ATP binding"/>
    <property type="evidence" value="ECO:0007669"/>
    <property type="project" value="UniProtKB-KW"/>
</dbReference>
<dbReference type="GO" id="GO:0016887">
    <property type="term" value="F:ATP hydrolysis activity"/>
    <property type="evidence" value="ECO:0007669"/>
    <property type="project" value="InterPro"/>
</dbReference>
<dbReference type="GO" id="GO:0015415">
    <property type="term" value="F:ATPase-coupled phosphate ion transmembrane transporter activity"/>
    <property type="evidence" value="ECO:0007669"/>
    <property type="project" value="UniProtKB-EC"/>
</dbReference>
<dbReference type="GO" id="GO:0035435">
    <property type="term" value="P:phosphate ion transmembrane transport"/>
    <property type="evidence" value="ECO:0007669"/>
    <property type="project" value="InterPro"/>
</dbReference>
<dbReference type="CDD" id="cd03260">
    <property type="entry name" value="ABC_PstB_phosphate_transporter"/>
    <property type="match status" value="1"/>
</dbReference>
<dbReference type="Gene3D" id="3.40.50.300">
    <property type="entry name" value="P-loop containing nucleotide triphosphate hydrolases"/>
    <property type="match status" value="1"/>
</dbReference>
<dbReference type="InterPro" id="IPR003593">
    <property type="entry name" value="AAA+_ATPase"/>
</dbReference>
<dbReference type="InterPro" id="IPR003439">
    <property type="entry name" value="ABC_transporter-like_ATP-bd"/>
</dbReference>
<dbReference type="InterPro" id="IPR017871">
    <property type="entry name" value="ABC_transporter-like_CS"/>
</dbReference>
<dbReference type="InterPro" id="IPR027417">
    <property type="entry name" value="P-loop_NTPase"/>
</dbReference>
<dbReference type="InterPro" id="IPR005670">
    <property type="entry name" value="PstB-like"/>
</dbReference>
<dbReference type="NCBIfam" id="TIGR00972">
    <property type="entry name" value="3a0107s01c2"/>
    <property type="match status" value="1"/>
</dbReference>
<dbReference type="PANTHER" id="PTHR43423">
    <property type="entry name" value="ABC TRANSPORTER I FAMILY MEMBER 17"/>
    <property type="match status" value="1"/>
</dbReference>
<dbReference type="PANTHER" id="PTHR43423:SF1">
    <property type="entry name" value="ABC TRANSPORTER I FAMILY MEMBER 17"/>
    <property type="match status" value="1"/>
</dbReference>
<dbReference type="Pfam" id="PF00005">
    <property type="entry name" value="ABC_tran"/>
    <property type="match status" value="1"/>
</dbReference>
<dbReference type="SMART" id="SM00382">
    <property type="entry name" value="AAA"/>
    <property type="match status" value="1"/>
</dbReference>
<dbReference type="SUPFAM" id="SSF52540">
    <property type="entry name" value="P-loop containing nucleoside triphosphate hydrolases"/>
    <property type="match status" value="1"/>
</dbReference>
<dbReference type="PROSITE" id="PS00211">
    <property type="entry name" value="ABC_TRANSPORTER_1"/>
    <property type="match status" value="1"/>
</dbReference>
<dbReference type="PROSITE" id="PS50893">
    <property type="entry name" value="ABC_TRANSPORTER_2"/>
    <property type="match status" value="1"/>
</dbReference>
<dbReference type="PROSITE" id="PS51238">
    <property type="entry name" value="PSTB"/>
    <property type="match status" value="1"/>
</dbReference>
<comment type="function">
    <text evidence="1">Part of the ABC transporter complex PstSACB involved in phosphate import. Responsible for energy coupling to the transport system.</text>
</comment>
<comment type="catalytic activity">
    <reaction evidence="1">
        <text>phosphate(out) + ATP + H2O = ADP + 2 phosphate(in) + H(+)</text>
        <dbReference type="Rhea" id="RHEA:24440"/>
        <dbReference type="ChEBI" id="CHEBI:15377"/>
        <dbReference type="ChEBI" id="CHEBI:15378"/>
        <dbReference type="ChEBI" id="CHEBI:30616"/>
        <dbReference type="ChEBI" id="CHEBI:43474"/>
        <dbReference type="ChEBI" id="CHEBI:456216"/>
        <dbReference type="EC" id="7.3.2.1"/>
    </reaction>
</comment>
<comment type="subunit">
    <text evidence="1">The complex is composed of two ATP-binding proteins (PstB), two transmembrane proteins (PstC and PstA) and a solute-binding protein (PstS).</text>
</comment>
<comment type="subcellular location">
    <subcellularLocation>
        <location evidence="1">Cell inner membrane</location>
        <topology evidence="1">Peripheral membrane protein</topology>
    </subcellularLocation>
</comment>
<comment type="similarity">
    <text evidence="1">Belongs to the ABC transporter superfamily. Phosphate importer (TC 3.A.1.7) family.</text>
</comment>
<sequence length="269" mass="30496">MVKDFSSQHPLGDVSPSQYKSEVRNLSFYYGSFLALKNINMMLHEKKVTALIGPSGCGKSTFLRCFNRMHDLYPGNRYMGDIILHPDNVNILSRSVDPIEVRMRISMVFQKPNPFPKSIYENVAYGLRVRGVRRRAILDEKVEDALRGAALWDEVKDRLHQLAYNLSGGQQQRLCIARALATDPEILLFDEPTSALDPIATASIEELIADLKDKVTILIVTHNMQQAARVSDYTAYMYLGEVIEFGVTDTIFIKPKNKQTEDYITGRFG</sequence>
<gene>
    <name evidence="1" type="primary">pstB</name>
    <name type="ordered locus">Nmul_A1088</name>
</gene>
<feature type="chain" id="PRO_0000272486" description="Phosphate import ATP-binding protein PstB">
    <location>
        <begin position="1"/>
        <end position="269"/>
    </location>
</feature>
<feature type="domain" description="ABC transporter" evidence="1">
    <location>
        <begin position="21"/>
        <end position="264"/>
    </location>
</feature>
<feature type="binding site" evidence="1">
    <location>
        <begin position="53"/>
        <end position="60"/>
    </location>
    <ligand>
        <name>ATP</name>
        <dbReference type="ChEBI" id="CHEBI:30616"/>
    </ligand>
</feature>
<keyword id="KW-0067">ATP-binding</keyword>
<keyword id="KW-0997">Cell inner membrane</keyword>
<keyword id="KW-1003">Cell membrane</keyword>
<keyword id="KW-0472">Membrane</keyword>
<keyword id="KW-0547">Nucleotide-binding</keyword>
<keyword id="KW-0592">Phosphate transport</keyword>
<keyword id="KW-1185">Reference proteome</keyword>
<keyword id="KW-1278">Translocase</keyword>
<keyword id="KW-0813">Transport</keyword>
<proteinExistence type="inferred from homology"/>
<reference key="1">
    <citation type="submission" date="2005-08" db="EMBL/GenBank/DDBJ databases">
        <title>Complete sequence of chromosome 1 of Nitrosospira multiformis ATCC 25196.</title>
        <authorList>
            <person name="Copeland A."/>
            <person name="Lucas S."/>
            <person name="Lapidus A."/>
            <person name="Barry K."/>
            <person name="Detter J.C."/>
            <person name="Glavina T."/>
            <person name="Hammon N."/>
            <person name="Israni S."/>
            <person name="Pitluck S."/>
            <person name="Chain P."/>
            <person name="Malfatti S."/>
            <person name="Shin M."/>
            <person name="Vergez L."/>
            <person name="Schmutz J."/>
            <person name="Larimer F."/>
            <person name="Land M."/>
            <person name="Hauser L."/>
            <person name="Kyrpides N."/>
            <person name="Lykidis A."/>
            <person name="Richardson P."/>
        </authorList>
    </citation>
    <scope>NUCLEOTIDE SEQUENCE [LARGE SCALE GENOMIC DNA]</scope>
    <source>
        <strain>ATCC 25196 / NCIMB 11849 / C 71</strain>
    </source>
</reference>
<accession>Q2YA30</accession>
<name>PSTB_NITMU</name>
<protein>
    <recommendedName>
        <fullName evidence="1">Phosphate import ATP-binding protein PstB</fullName>
        <ecNumber evidence="1">7.3.2.1</ecNumber>
    </recommendedName>
    <alternativeName>
        <fullName evidence="1">ABC phosphate transporter</fullName>
    </alternativeName>
    <alternativeName>
        <fullName evidence="1">Phosphate-transporting ATPase</fullName>
    </alternativeName>
</protein>
<organism>
    <name type="scientific">Nitrosospira multiformis (strain ATCC 25196 / NCIMB 11849 / C 71)</name>
    <dbReference type="NCBI Taxonomy" id="323848"/>
    <lineage>
        <taxon>Bacteria</taxon>
        <taxon>Pseudomonadati</taxon>
        <taxon>Pseudomonadota</taxon>
        <taxon>Betaproteobacteria</taxon>
        <taxon>Nitrosomonadales</taxon>
        <taxon>Nitrosomonadaceae</taxon>
        <taxon>Nitrosospira</taxon>
    </lineage>
</organism>